<organism>
    <name type="scientific">Metarhizium acridum (strain CQMa 102)</name>
    <dbReference type="NCBI Taxonomy" id="655827"/>
    <lineage>
        <taxon>Eukaryota</taxon>
        <taxon>Fungi</taxon>
        <taxon>Dikarya</taxon>
        <taxon>Ascomycota</taxon>
        <taxon>Pezizomycotina</taxon>
        <taxon>Sordariomycetes</taxon>
        <taxon>Hypocreomycetidae</taxon>
        <taxon>Hypocreales</taxon>
        <taxon>Clavicipitaceae</taxon>
        <taxon>Metarhizium</taxon>
    </lineage>
</organism>
<keyword id="KW-0031">Aminopeptidase</keyword>
<keyword id="KW-0378">Hydrolase</keyword>
<keyword id="KW-0464">Manganese</keyword>
<keyword id="KW-0479">Metal-binding</keyword>
<keyword id="KW-0482">Metalloprotease</keyword>
<keyword id="KW-0645">Protease</keyword>
<keyword id="KW-1185">Reference proteome</keyword>
<sequence>MNYHSFLPLRRSSLSHSTTPPSKSRNQTRYIWSIALQNTMAVEDFEAVLKAKYPGKAHAKRVVDLIRKTKPDANGVIYLEGRMTKLLEDNDSPEPFRQRRFFYYLTGCNLADCALAYDIQSSKSILFIPPIDPDDVIWSGLPLSIDEALSRYDVDEVKFTTEVNPTLTHLAKQSPNSTVFAIANQVSDNVTFIEFGSKDFETVKKAIEVSRVVKDEFEVAMIRKANHISSLAHKAVIERSKTAATEQELYATFLERCVSHAAPEMAYHPILAAGKAAATLHYVDNNAPLKGKQNLLIDAGCEWNNYASDITRTFPLTGKFTKESRDIYDIVLRMQKECTELIKGGMIWDDLHLHAHKVAIDGLLALGILKGDAKEILDARTSAAFFPHGLGHHLGMDTHDTGGNPNPNDPDKLFRYLRLRGHVPAGAVVTVEPGIYFCDFIIKPYLDDHVHSKYIDAAVLNKYWDVGGVRIEDNIHVTENGYVNLTTAIKEVSDVEAVSAK</sequence>
<comment type="function">
    <text evidence="1">Catalyzes the removal of a penultimate prolyl residue from the N-termini of peptides.</text>
</comment>
<comment type="catalytic activity">
    <reaction>
        <text>Release of any N-terminal amino acid, including proline, that is linked to proline, even from a dipeptide or tripeptide.</text>
        <dbReference type="EC" id="3.4.11.9"/>
    </reaction>
</comment>
<comment type="cofactor">
    <cofactor evidence="1">
        <name>Mn(2+)</name>
        <dbReference type="ChEBI" id="CHEBI:29035"/>
    </cofactor>
    <text evidence="1">Binds 2 manganese ions per subunit.</text>
</comment>
<comment type="similarity">
    <text evidence="3">Belongs to the peptidase M24B family.</text>
</comment>
<evidence type="ECO:0000250" key="1"/>
<evidence type="ECO:0000256" key="2">
    <source>
        <dbReference type="SAM" id="MobiDB-lite"/>
    </source>
</evidence>
<evidence type="ECO:0000305" key="3"/>
<reference key="1">
    <citation type="journal article" date="2011" name="PLoS Genet.">
        <title>Genome sequencing and comparative transcriptomics of the model entomopathogenic fungi Metarhizium anisopliae and M. acridum.</title>
        <authorList>
            <person name="Gao Q."/>
            <person name="Jin K."/>
            <person name="Ying S.-H."/>
            <person name="Zhang Y."/>
            <person name="Xiao G."/>
            <person name="Shang Y."/>
            <person name="Duan Z."/>
            <person name="Hu X."/>
            <person name="Xie X.-Q."/>
            <person name="Zhou G."/>
            <person name="Peng G."/>
            <person name="Luo Z."/>
            <person name="Huang W."/>
            <person name="Wang B."/>
            <person name="Fang W."/>
            <person name="Wang S."/>
            <person name="Zhong Y."/>
            <person name="Ma L.-J."/>
            <person name="St Leger R.J."/>
            <person name="Zhao G.-P."/>
            <person name="Pei Y."/>
            <person name="Feng M.-G."/>
            <person name="Xia Y."/>
            <person name="Wang C."/>
        </authorList>
    </citation>
    <scope>NUCLEOTIDE SEQUENCE [LARGE SCALE GENOMIC DNA]</scope>
    <source>
        <strain>CQMa 102</strain>
    </source>
</reference>
<dbReference type="EC" id="3.4.11.9"/>
<dbReference type="EMBL" id="GL698475">
    <property type="protein sequence ID" value="EFY92480.1"/>
    <property type="molecule type" value="Genomic_DNA"/>
</dbReference>
<dbReference type="RefSeq" id="XP_007807786.1">
    <property type="nucleotide sequence ID" value="XM_007809595.1"/>
</dbReference>
<dbReference type="SMR" id="E9DV56"/>
<dbReference type="FunCoup" id="E9DV56">
    <property type="interactions" value="398"/>
</dbReference>
<dbReference type="STRING" id="655827.E9DV56"/>
<dbReference type="GeneID" id="19245757"/>
<dbReference type="KEGG" id="maw:19245757"/>
<dbReference type="eggNOG" id="KOG2737">
    <property type="taxonomic scope" value="Eukaryota"/>
</dbReference>
<dbReference type="HOGENOM" id="CLU_017266_1_2_1"/>
<dbReference type="InParanoid" id="E9DV56"/>
<dbReference type="OMA" id="DAHALFF"/>
<dbReference type="OrthoDB" id="10261878at2759"/>
<dbReference type="Proteomes" id="UP000002499">
    <property type="component" value="Unassembled WGS sequence"/>
</dbReference>
<dbReference type="GO" id="GO:0030145">
    <property type="term" value="F:manganese ion binding"/>
    <property type="evidence" value="ECO:0007669"/>
    <property type="project" value="InterPro"/>
</dbReference>
<dbReference type="GO" id="GO:0070006">
    <property type="term" value="F:metalloaminopeptidase activity"/>
    <property type="evidence" value="ECO:0007669"/>
    <property type="project" value="InterPro"/>
</dbReference>
<dbReference type="GO" id="GO:0006508">
    <property type="term" value="P:proteolysis"/>
    <property type="evidence" value="ECO:0007669"/>
    <property type="project" value="UniProtKB-KW"/>
</dbReference>
<dbReference type="CDD" id="cd01087">
    <property type="entry name" value="Prolidase"/>
    <property type="match status" value="1"/>
</dbReference>
<dbReference type="Gene3D" id="3.90.230.10">
    <property type="entry name" value="Creatinase/methionine aminopeptidase superfamily"/>
    <property type="match status" value="1"/>
</dbReference>
<dbReference type="Gene3D" id="3.40.350.10">
    <property type="entry name" value="Creatinase/prolidase N-terminal domain"/>
    <property type="match status" value="1"/>
</dbReference>
<dbReference type="InterPro" id="IPR007865">
    <property type="entry name" value="Aminopep_P_N"/>
</dbReference>
<dbReference type="InterPro" id="IPR029149">
    <property type="entry name" value="Creatin/AminoP/Spt16_N"/>
</dbReference>
<dbReference type="InterPro" id="IPR036005">
    <property type="entry name" value="Creatinase/aminopeptidase-like"/>
</dbReference>
<dbReference type="InterPro" id="IPR000994">
    <property type="entry name" value="Pept_M24"/>
</dbReference>
<dbReference type="InterPro" id="IPR052433">
    <property type="entry name" value="X-Pro_dipept-like"/>
</dbReference>
<dbReference type="PANTHER" id="PTHR43226">
    <property type="entry name" value="XAA-PRO AMINOPEPTIDASE 3"/>
    <property type="match status" value="1"/>
</dbReference>
<dbReference type="PANTHER" id="PTHR43226:SF1">
    <property type="entry name" value="XAA-PRO DIPEPTIDASE"/>
    <property type="match status" value="1"/>
</dbReference>
<dbReference type="Pfam" id="PF05195">
    <property type="entry name" value="AMP_N"/>
    <property type="match status" value="1"/>
</dbReference>
<dbReference type="Pfam" id="PF00557">
    <property type="entry name" value="Peptidase_M24"/>
    <property type="match status" value="1"/>
</dbReference>
<dbReference type="SMART" id="SM01011">
    <property type="entry name" value="AMP_N"/>
    <property type="match status" value="1"/>
</dbReference>
<dbReference type="SUPFAM" id="SSF55920">
    <property type="entry name" value="Creatinase/aminopeptidase"/>
    <property type="match status" value="1"/>
</dbReference>
<dbReference type="SUPFAM" id="SSF53092">
    <property type="entry name" value="Creatinase/prolidase N-terminal domain"/>
    <property type="match status" value="1"/>
</dbReference>
<protein>
    <recommendedName>
        <fullName>Probable Xaa-Pro aminopeptidase pepP</fullName>
        <ecNumber>3.4.11.9</ecNumber>
    </recommendedName>
    <alternativeName>
        <fullName>Aminoacylproline aminopeptidase</fullName>
    </alternativeName>
    <alternativeName>
        <fullName>Prolidase</fullName>
    </alternativeName>
</protein>
<gene>
    <name type="primary">pepP</name>
    <name type="ORF">MAC_01446</name>
</gene>
<proteinExistence type="inferred from homology"/>
<name>AMPP3_METAQ</name>
<feature type="chain" id="PRO_0000411875" description="Probable Xaa-Pro aminopeptidase pepP">
    <location>
        <begin position="1"/>
        <end position="501"/>
    </location>
</feature>
<feature type="region of interest" description="Disordered" evidence="2">
    <location>
        <begin position="1"/>
        <end position="25"/>
    </location>
</feature>
<feature type="compositionally biased region" description="Polar residues" evidence="2">
    <location>
        <begin position="12"/>
        <end position="25"/>
    </location>
</feature>
<feature type="binding site" evidence="1">
    <location>
        <position position="298"/>
    </location>
    <ligand>
        <name>Mn(2+)</name>
        <dbReference type="ChEBI" id="CHEBI:29035"/>
        <label>2</label>
    </ligand>
</feature>
<feature type="binding site" evidence="1">
    <location>
        <position position="309"/>
    </location>
    <ligand>
        <name>Mn(2+)</name>
        <dbReference type="ChEBI" id="CHEBI:29035"/>
        <label>1</label>
    </ligand>
</feature>
<feature type="binding site" evidence="1">
    <location>
        <position position="309"/>
    </location>
    <ligand>
        <name>Mn(2+)</name>
        <dbReference type="ChEBI" id="CHEBI:29035"/>
        <label>2</label>
    </ligand>
</feature>
<feature type="binding site" evidence="1">
    <location>
        <position position="432"/>
    </location>
    <ligand>
        <name>Mn(2+)</name>
        <dbReference type="ChEBI" id="CHEBI:29035"/>
        <label>1</label>
    </ligand>
</feature>
<feature type="binding site" evidence="1">
    <location>
        <position position="472"/>
    </location>
    <ligand>
        <name>Mn(2+)</name>
        <dbReference type="ChEBI" id="CHEBI:29035"/>
        <label>1</label>
    </ligand>
</feature>
<feature type="binding site" evidence="1">
    <location>
        <position position="472"/>
    </location>
    <ligand>
        <name>Mn(2+)</name>
        <dbReference type="ChEBI" id="CHEBI:29035"/>
        <label>2</label>
    </ligand>
</feature>
<accession>E9DV56</accession>